<proteinExistence type="inferred from homology"/>
<keyword id="KW-0997">Cell inner membrane</keyword>
<keyword id="KW-1003">Cell membrane</keyword>
<keyword id="KW-0868">Chloride</keyword>
<keyword id="KW-0869">Chloride channel</keyword>
<keyword id="KW-0407">Ion channel</keyword>
<keyword id="KW-0406">Ion transport</keyword>
<keyword id="KW-0472">Membrane</keyword>
<keyword id="KW-0812">Transmembrane</keyword>
<keyword id="KW-1133">Transmembrane helix</keyword>
<keyword id="KW-0813">Transport</keyword>
<keyword id="KW-0851">Voltage-gated channel</keyword>
<gene>
    <name evidence="1" type="primary">clcB</name>
    <name type="ordered locus">ECDH10B_1725</name>
</gene>
<name>CLCB_ECODH</name>
<accession>B1XF57</accession>
<sequence length="418" mass="44153">MFHRLLIATVVGILAAFAVAGFRHAMLLLEWLFLNNDSGSLVNAATNLSPWRRLLTPALGGLAAGLLLMGWQKFTQQRPHAPTDYMEALQTDGQFDYAASLVKSLASLLVVTSGSAIGREGAMILLAALAASCFAQRFTPRQEWKLWIACGAAAGMAAAYRAPLAGSLFIAEVLFGTMMLASLGPVIISAVVALLVSNLINHSDALLYNVQLSVTVQARDYALIISTGVLAGLCGPLLLTLMNACHRGFVSLKLAPPWQLALGGLIVGLLSLFTPAVWGNGYSTVQSFLTAPPLLMIIAGIFLCKLCAVLASSGSGAPGGVFTPTLFIGLAIGMLYGRSLGLWFPDGEEITLLLGLTGMATLLAATTHAPIMSTLMICEMTGEYQLLPGLLIACVIASVISRTLHRDSIYRQHTAQHS</sequence>
<comment type="function">
    <text evidence="1">Probably acts as an electrical shunt for an outwardly-directed proton pump that is linked to amino acid decarboxylation, as part of the extreme acid resistance (XAR) response.</text>
</comment>
<comment type="subcellular location">
    <subcellularLocation>
        <location evidence="1">Cell inner membrane</location>
        <topology evidence="1">Multi-pass membrane protein</topology>
    </subcellularLocation>
</comment>
<comment type="similarity">
    <text evidence="1">Belongs to the chloride channel (TC 2.A.49) family. ClcB subfamily.</text>
</comment>
<reference key="1">
    <citation type="journal article" date="2008" name="J. Bacteriol.">
        <title>The complete genome sequence of Escherichia coli DH10B: insights into the biology of a laboratory workhorse.</title>
        <authorList>
            <person name="Durfee T."/>
            <person name="Nelson R."/>
            <person name="Baldwin S."/>
            <person name="Plunkett G. III"/>
            <person name="Burland V."/>
            <person name="Mau B."/>
            <person name="Petrosino J.F."/>
            <person name="Qin X."/>
            <person name="Muzny D.M."/>
            <person name="Ayele M."/>
            <person name="Gibbs R.A."/>
            <person name="Csorgo B."/>
            <person name="Posfai G."/>
            <person name="Weinstock G.M."/>
            <person name="Blattner F.R."/>
        </authorList>
    </citation>
    <scope>NUCLEOTIDE SEQUENCE [LARGE SCALE GENOMIC DNA]</scope>
    <source>
        <strain>K12 / DH10B</strain>
    </source>
</reference>
<protein>
    <recommendedName>
        <fullName evidence="1">Voltage-gated ClC-type chloride channel ClcB</fullName>
    </recommendedName>
</protein>
<dbReference type="EMBL" id="CP000948">
    <property type="protein sequence ID" value="ACB02798.1"/>
    <property type="molecule type" value="Genomic_DNA"/>
</dbReference>
<dbReference type="SMR" id="B1XF57"/>
<dbReference type="KEGG" id="ecd:ECDH10B_1725"/>
<dbReference type="HOGENOM" id="CLU_015263_5_2_6"/>
<dbReference type="GO" id="GO:0034707">
    <property type="term" value="C:chloride channel complex"/>
    <property type="evidence" value="ECO:0007669"/>
    <property type="project" value="UniProtKB-KW"/>
</dbReference>
<dbReference type="GO" id="GO:0005886">
    <property type="term" value="C:plasma membrane"/>
    <property type="evidence" value="ECO:0007669"/>
    <property type="project" value="UniProtKB-SubCell"/>
</dbReference>
<dbReference type="GO" id="GO:0005247">
    <property type="term" value="F:voltage-gated chloride channel activity"/>
    <property type="evidence" value="ECO:0007669"/>
    <property type="project" value="UniProtKB-UniRule"/>
</dbReference>
<dbReference type="GO" id="GO:0010447">
    <property type="term" value="P:response to acidic pH"/>
    <property type="evidence" value="ECO:0007669"/>
    <property type="project" value="InterPro"/>
</dbReference>
<dbReference type="CDD" id="cd00400">
    <property type="entry name" value="Voltage_gated_ClC"/>
    <property type="match status" value="1"/>
</dbReference>
<dbReference type="FunFam" id="1.10.3080.10:FF:000010">
    <property type="entry name" value="Voltage-gated ClC-type chloride channel ClcB"/>
    <property type="match status" value="1"/>
</dbReference>
<dbReference type="Gene3D" id="1.10.3080.10">
    <property type="entry name" value="Clc chloride channel"/>
    <property type="match status" value="1"/>
</dbReference>
<dbReference type="HAMAP" id="MF_01203">
    <property type="entry name" value="CLC_ClcB"/>
    <property type="match status" value="1"/>
</dbReference>
<dbReference type="InterPro" id="IPR014743">
    <property type="entry name" value="Cl-channel_core"/>
</dbReference>
<dbReference type="InterPro" id="IPR023790">
    <property type="entry name" value="Cl-channel_volt-gated_ClcB"/>
</dbReference>
<dbReference type="InterPro" id="IPR001807">
    <property type="entry name" value="ClC"/>
</dbReference>
<dbReference type="InterPro" id="IPR050368">
    <property type="entry name" value="ClC-type_chloride_channel"/>
</dbReference>
<dbReference type="NCBIfam" id="NF002437">
    <property type="entry name" value="PRK01610.1"/>
    <property type="match status" value="1"/>
</dbReference>
<dbReference type="PANTHER" id="PTHR43427">
    <property type="entry name" value="CHLORIDE CHANNEL PROTEIN CLC-E"/>
    <property type="match status" value="1"/>
</dbReference>
<dbReference type="PANTHER" id="PTHR43427:SF6">
    <property type="entry name" value="CHLORIDE CHANNEL PROTEIN CLC-E"/>
    <property type="match status" value="1"/>
</dbReference>
<dbReference type="Pfam" id="PF00654">
    <property type="entry name" value="Voltage_CLC"/>
    <property type="match status" value="1"/>
</dbReference>
<dbReference type="PRINTS" id="PR00762">
    <property type="entry name" value="CLCHANNEL"/>
</dbReference>
<dbReference type="SUPFAM" id="SSF81340">
    <property type="entry name" value="Clc chloride channel"/>
    <property type="match status" value="1"/>
</dbReference>
<organism>
    <name type="scientific">Escherichia coli (strain K12 / DH10B)</name>
    <dbReference type="NCBI Taxonomy" id="316385"/>
    <lineage>
        <taxon>Bacteria</taxon>
        <taxon>Pseudomonadati</taxon>
        <taxon>Pseudomonadota</taxon>
        <taxon>Gammaproteobacteria</taxon>
        <taxon>Enterobacterales</taxon>
        <taxon>Enterobacteriaceae</taxon>
        <taxon>Escherichia</taxon>
    </lineage>
</organism>
<feature type="chain" id="PRO_1000138683" description="Voltage-gated ClC-type chloride channel ClcB">
    <location>
        <begin position="1"/>
        <end position="418"/>
    </location>
</feature>
<feature type="transmembrane region" description="Helical" evidence="1">
    <location>
        <begin position="2"/>
        <end position="22"/>
    </location>
</feature>
<feature type="transmembrane region" description="Helical" evidence="1">
    <location>
        <begin position="54"/>
        <end position="74"/>
    </location>
</feature>
<feature type="transmembrane region" description="Helical" evidence="1">
    <location>
        <begin position="146"/>
        <end position="166"/>
    </location>
</feature>
<feature type="transmembrane region" description="Helical" evidence="1">
    <location>
        <begin position="168"/>
        <end position="188"/>
    </location>
</feature>
<feature type="transmembrane region" description="Helical" evidence="1">
    <location>
        <begin position="222"/>
        <end position="242"/>
    </location>
</feature>
<feature type="transmembrane region" description="Helical" evidence="1">
    <location>
        <begin position="258"/>
        <end position="278"/>
    </location>
</feature>
<feature type="transmembrane region" description="Helical" evidence="1">
    <location>
        <begin position="291"/>
        <end position="311"/>
    </location>
</feature>
<feature type="transmembrane region" description="Helical" evidence="1">
    <location>
        <begin position="316"/>
        <end position="336"/>
    </location>
</feature>
<feature type="transmembrane region" description="Helical" evidence="1">
    <location>
        <begin position="352"/>
        <end position="372"/>
    </location>
</feature>
<feature type="transmembrane region" description="Helical" evidence="1">
    <location>
        <begin position="380"/>
        <end position="400"/>
    </location>
</feature>
<evidence type="ECO:0000255" key="1">
    <source>
        <dbReference type="HAMAP-Rule" id="MF_01203"/>
    </source>
</evidence>